<name>HIS1_SHESA</name>
<accession>A0KWB6</accession>
<sequence length="299" mass="32951">MTESNRLRIAIQKSGRLSTDSQQLLKSCGIKFSINEQRLIAHADNMPIDLLRVRDDDIPGLVMDGVVDLGIIGENVLEEEQIERQTLNKPAEFVKLRQLDFGACRLSLAVPSEFSYADASSLEGLRIATSYPNLLRRFMQQKGISYRDCMLKGSVEVAPRAGLADGICDLVSTGATLEANGLYETEVIYRSMACVIQSTQTQTPSKQALIDRILSRVNGVIRARESKYILLHAPTETLDQIVALLPGAENPTVLPLNDDTNRVAIHAVSTEDLFWDTMEELTALGASSILVMPIEKMMG</sequence>
<protein>
    <recommendedName>
        <fullName evidence="1">ATP phosphoribosyltransferase</fullName>
        <shortName evidence="1">ATP-PRT</shortName>
        <shortName evidence="1">ATP-PRTase</shortName>
        <ecNumber evidence="1">2.4.2.17</ecNumber>
    </recommendedName>
</protein>
<organism>
    <name type="scientific">Shewanella sp. (strain ANA-3)</name>
    <dbReference type="NCBI Taxonomy" id="94122"/>
    <lineage>
        <taxon>Bacteria</taxon>
        <taxon>Pseudomonadati</taxon>
        <taxon>Pseudomonadota</taxon>
        <taxon>Gammaproteobacteria</taxon>
        <taxon>Alteromonadales</taxon>
        <taxon>Shewanellaceae</taxon>
        <taxon>Shewanella</taxon>
    </lineage>
</organism>
<keyword id="KW-0028">Amino-acid biosynthesis</keyword>
<keyword id="KW-0067">ATP-binding</keyword>
<keyword id="KW-0963">Cytoplasm</keyword>
<keyword id="KW-0328">Glycosyltransferase</keyword>
<keyword id="KW-0368">Histidine biosynthesis</keyword>
<keyword id="KW-0460">Magnesium</keyword>
<keyword id="KW-0479">Metal-binding</keyword>
<keyword id="KW-0547">Nucleotide-binding</keyword>
<keyword id="KW-0808">Transferase</keyword>
<evidence type="ECO:0000255" key="1">
    <source>
        <dbReference type="HAMAP-Rule" id="MF_00079"/>
    </source>
</evidence>
<gene>
    <name evidence="1" type="primary">hisG</name>
    <name type="ordered locus">Shewana3_1854</name>
</gene>
<reference key="1">
    <citation type="submission" date="2006-09" db="EMBL/GenBank/DDBJ databases">
        <title>Complete sequence of chromosome 1 of Shewanella sp. ANA-3.</title>
        <authorList>
            <person name="Copeland A."/>
            <person name="Lucas S."/>
            <person name="Lapidus A."/>
            <person name="Barry K."/>
            <person name="Detter J.C."/>
            <person name="Glavina del Rio T."/>
            <person name="Hammon N."/>
            <person name="Israni S."/>
            <person name="Dalin E."/>
            <person name="Tice H."/>
            <person name="Pitluck S."/>
            <person name="Chertkov O."/>
            <person name="Brettin T."/>
            <person name="Bruce D."/>
            <person name="Han C."/>
            <person name="Tapia R."/>
            <person name="Gilna P."/>
            <person name="Schmutz J."/>
            <person name="Larimer F."/>
            <person name="Land M."/>
            <person name="Hauser L."/>
            <person name="Kyrpides N."/>
            <person name="Kim E."/>
            <person name="Newman D."/>
            <person name="Salticov C."/>
            <person name="Konstantinidis K."/>
            <person name="Klappenback J."/>
            <person name="Tiedje J."/>
            <person name="Richardson P."/>
        </authorList>
    </citation>
    <scope>NUCLEOTIDE SEQUENCE [LARGE SCALE GENOMIC DNA]</scope>
    <source>
        <strain>ANA-3</strain>
    </source>
</reference>
<comment type="function">
    <text evidence="1">Catalyzes the condensation of ATP and 5-phosphoribose 1-diphosphate to form N'-(5'-phosphoribosyl)-ATP (PR-ATP). Has a crucial role in the pathway because the rate of histidine biosynthesis seems to be controlled primarily by regulation of HisG enzymatic activity.</text>
</comment>
<comment type="catalytic activity">
    <reaction evidence="1">
        <text>1-(5-phospho-beta-D-ribosyl)-ATP + diphosphate = 5-phospho-alpha-D-ribose 1-diphosphate + ATP</text>
        <dbReference type="Rhea" id="RHEA:18473"/>
        <dbReference type="ChEBI" id="CHEBI:30616"/>
        <dbReference type="ChEBI" id="CHEBI:33019"/>
        <dbReference type="ChEBI" id="CHEBI:58017"/>
        <dbReference type="ChEBI" id="CHEBI:73183"/>
        <dbReference type="EC" id="2.4.2.17"/>
    </reaction>
</comment>
<comment type="cofactor">
    <cofactor evidence="1">
        <name>Mg(2+)</name>
        <dbReference type="ChEBI" id="CHEBI:18420"/>
    </cofactor>
</comment>
<comment type="activity regulation">
    <text evidence="1">Feedback inhibited by histidine.</text>
</comment>
<comment type="pathway">
    <text evidence="1">Amino-acid biosynthesis; L-histidine biosynthesis; L-histidine from 5-phospho-alpha-D-ribose 1-diphosphate: step 1/9.</text>
</comment>
<comment type="subcellular location">
    <subcellularLocation>
        <location evidence="1">Cytoplasm</location>
    </subcellularLocation>
</comment>
<comment type="similarity">
    <text evidence="1">Belongs to the ATP phosphoribosyltransferase family. Long subfamily.</text>
</comment>
<dbReference type="EC" id="2.4.2.17" evidence="1"/>
<dbReference type="EMBL" id="CP000469">
    <property type="protein sequence ID" value="ABK48085.1"/>
    <property type="molecule type" value="Genomic_DNA"/>
</dbReference>
<dbReference type="RefSeq" id="WP_011716859.1">
    <property type="nucleotide sequence ID" value="NC_008577.1"/>
</dbReference>
<dbReference type="SMR" id="A0KWB6"/>
<dbReference type="STRING" id="94122.Shewana3_1854"/>
<dbReference type="KEGG" id="shn:Shewana3_1854"/>
<dbReference type="eggNOG" id="COG0040">
    <property type="taxonomic scope" value="Bacteria"/>
</dbReference>
<dbReference type="HOGENOM" id="CLU_038115_1_0_6"/>
<dbReference type="OrthoDB" id="9801867at2"/>
<dbReference type="UniPathway" id="UPA00031">
    <property type="reaction ID" value="UER00006"/>
</dbReference>
<dbReference type="Proteomes" id="UP000002589">
    <property type="component" value="Chromosome"/>
</dbReference>
<dbReference type="GO" id="GO:0005737">
    <property type="term" value="C:cytoplasm"/>
    <property type="evidence" value="ECO:0007669"/>
    <property type="project" value="UniProtKB-SubCell"/>
</dbReference>
<dbReference type="GO" id="GO:0005524">
    <property type="term" value="F:ATP binding"/>
    <property type="evidence" value="ECO:0007669"/>
    <property type="project" value="UniProtKB-KW"/>
</dbReference>
<dbReference type="GO" id="GO:0003879">
    <property type="term" value="F:ATP phosphoribosyltransferase activity"/>
    <property type="evidence" value="ECO:0007669"/>
    <property type="project" value="UniProtKB-UniRule"/>
</dbReference>
<dbReference type="GO" id="GO:0000287">
    <property type="term" value="F:magnesium ion binding"/>
    <property type="evidence" value="ECO:0007669"/>
    <property type="project" value="UniProtKB-UniRule"/>
</dbReference>
<dbReference type="GO" id="GO:0000105">
    <property type="term" value="P:L-histidine biosynthetic process"/>
    <property type="evidence" value="ECO:0007669"/>
    <property type="project" value="UniProtKB-UniRule"/>
</dbReference>
<dbReference type="CDD" id="cd13592">
    <property type="entry name" value="PBP2_HisGL2"/>
    <property type="match status" value="1"/>
</dbReference>
<dbReference type="FunFam" id="3.30.70.120:FF:000002">
    <property type="entry name" value="ATP phosphoribosyltransferase"/>
    <property type="match status" value="1"/>
</dbReference>
<dbReference type="FunFam" id="3.40.190.10:FF:000008">
    <property type="entry name" value="ATP phosphoribosyltransferase"/>
    <property type="match status" value="1"/>
</dbReference>
<dbReference type="Gene3D" id="3.30.70.120">
    <property type="match status" value="1"/>
</dbReference>
<dbReference type="Gene3D" id="3.40.190.10">
    <property type="entry name" value="Periplasmic binding protein-like II"/>
    <property type="match status" value="2"/>
</dbReference>
<dbReference type="HAMAP" id="MF_00079">
    <property type="entry name" value="HisG_Long"/>
    <property type="match status" value="1"/>
</dbReference>
<dbReference type="InterPro" id="IPR020621">
    <property type="entry name" value="ATP-PRT_HisG_long"/>
</dbReference>
<dbReference type="InterPro" id="IPR013820">
    <property type="entry name" value="ATP_PRibTrfase_cat"/>
</dbReference>
<dbReference type="InterPro" id="IPR018198">
    <property type="entry name" value="ATP_PRibTrfase_CS"/>
</dbReference>
<dbReference type="InterPro" id="IPR001348">
    <property type="entry name" value="ATP_PRibTrfase_HisG"/>
</dbReference>
<dbReference type="InterPro" id="IPR013115">
    <property type="entry name" value="HisG_C"/>
</dbReference>
<dbReference type="InterPro" id="IPR011322">
    <property type="entry name" value="N-reg_PII-like_a/b"/>
</dbReference>
<dbReference type="InterPro" id="IPR015867">
    <property type="entry name" value="N-reg_PII/ATP_PRibTrfase_C"/>
</dbReference>
<dbReference type="NCBIfam" id="TIGR00070">
    <property type="entry name" value="hisG"/>
    <property type="match status" value="1"/>
</dbReference>
<dbReference type="NCBIfam" id="TIGR03455">
    <property type="entry name" value="HisG_C-term"/>
    <property type="match status" value="1"/>
</dbReference>
<dbReference type="PANTHER" id="PTHR21403:SF8">
    <property type="entry name" value="ATP PHOSPHORIBOSYLTRANSFERASE"/>
    <property type="match status" value="1"/>
</dbReference>
<dbReference type="PANTHER" id="PTHR21403">
    <property type="entry name" value="ATP PHOSPHORIBOSYLTRANSFERASE ATP-PRTASE"/>
    <property type="match status" value="1"/>
</dbReference>
<dbReference type="Pfam" id="PF01634">
    <property type="entry name" value="HisG"/>
    <property type="match status" value="1"/>
</dbReference>
<dbReference type="Pfam" id="PF08029">
    <property type="entry name" value="HisG_C"/>
    <property type="match status" value="1"/>
</dbReference>
<dbReference type="SUPFAM" id="SSF54913">
    <property type="entry name" value="GlnB-like"/>
    <property type="match status" value="1"/>
</dbReference>
<dbReference type="SUPFAM" id="SSF53850">
    <property type="entry name" value="Periplasmic binding protein-like II"/>
    <property type="match status" value="1"/>
</dbReference>
<dbReference type="PROSITE" id="PS01316">
    <property type="entry name" value="ATP_P_PHORIBOSYLTR"/>
    <property type="match status" value="1"/>
</dbReference>
<feature type="chain" id="PRO_1000004504" description="ATP phosphoribosyltransferase">
    <location>
        <begin position="1"/>
        <end position="299"/>
    </location>
</feature>
<proteinExistence type="inferred from homology"/>